<proteinExistence type="inferred from homology"/>
<reference key="1">
    <citation type="submission" date="2005-07" db="EMBL/GenBank/DDBJ databases">
        <title>Environmental energy and species richness in flowering plants.</title>
        <authorList>
            <person name="Davies T.J."/>
        </authorList>
    </citation>
    <scope>NUCLEOTIDE SEQUENCE [GENOMIC DNA]</scope>
</reference>
<evidence type="ECO:0000255" key="1">
    <source>
        <dbReference type="HAMAP-Rule" id="MF_01390"/>
    </source>
</evidence>
<keyword id="KW-0150">Chloroplast</keyword>
<keyword id="KW-0507">mRNA processing</keyword>
<keyword id="KW-0934">Plastid</keyword>
<keyword id="KW-0694">RNA-binding</keyword>
<keyword id="KW-0819">tRNA processing</keyword>
<dbReference type="EMBL" id="AJ579961">
    <property type="protein sequence ID" value="CAE45234.1"/>
    <property type="molecule type" value="Genomic_DNA"/>
</dbReference>
<dbReference type="GO" id="GO:0009507">
    <property type="term" value="C:chloroplast"/>
    <property type="evidence" value="ECO:0007669"/>
    <property type="project" value="UniProtKB-SubCell"/>
</dbReference>
<dbReference type="GO" id="GO:0003723">
    <property type="term" value="F:RNA binding"/>
    <property type="evidence" value="ECO:0007669"/>
    <property type="project" value="UniProtKB-KW"/>
</dbReference>
<dbReference type="GO" id="GO:0006397">
    <property type="term" value="P:mRNA processing"/>
    <property type="evidence" value="ECO:0007669"/>
    <property type="project" value="UniProtKB-KW"/>
</dbReference>
<dbReference type="GO" id="GO:0008380">
    <property type="term" value="P:RNA splicing"/>
    <property type="evidence" value="ECO:0007669"/>
    <property type="project" value="UniProtKB-UniRule"/>
</dbReference>
<dbReference type="GO" id="GO:0008033">
    <property type="term" value="P:tRNA processing"/>
    <property type="evidence" value="ECO:0007669"/>
    <property type="project" value="UniProtKB-KW"/>
</dbReference>
<dbReference type="HAMAP" id="MF_01390">
    <property type="entry name" value="MatK"/>
    <property type="match status" value="1"/>
</dbReference>
<dbReference type="InterPro" id="IPR024937">
    <property type="entry name" value="Domain_X"/>
</dbReference>
<dbReference type="InterPro" id="IPR002866">
    <property type="entry name" value="Maturase_MatK"/>
</dbReference>
<dbReference type="InterPro" id="IPR024942">
    <property type="entry name" value="Maturase_MatK_N"/>
</dbReference>
<dbReference type="PANTHER" id="PTHR34811">
    <property type="entry name" value="MATURASE K"/>
    <property type="match status" value="1"/>
</dbReference>
<dbReference type="PANTHER" id="PTHR34811:SF1">
    <property type="entry name" value="MATURASE K"/>
    <property type="match status" value="1"/>
</dbReference>
<dbReference type="Pfam" id="PF01348">
    <property type="entry name" value="Intron_maturas2"/>
    <property type="match status" value="1"/>
</dbReference>
<dbReference type="Pfam" id="PF01824">
    <property type="entry name" value="MatK_N"/>
    <property type="match status" value="1"/>
</dbReference>
<sequence>MEELQGYLEKDRSRQQPLLYPLLFQEYIYALAHDRGLKGSLFYEPTEVFGYDSKFSLALVKRLIIRIYQQNFFLSVVNDSNKNRFVSHHHNNFCYSHFYSQMISEGFAILVEIPFSLRLVSYFEKKEIPKSHNLRSIHSFFPFLEDKLLHSDYVSDIIIPHPIHMEILVQILQCWIQDVPLLHFLRFFLHKYHNWNSFLITPKKSIYVFSKENKRLFRFLYNSYVSECEFLLVFLRKQSSYLRLTSFGTFLERRHFYVKMEHLQMQHLILIVVCRDYFQGTLWSFKDPFMHYVRCQGKAVLASKGTHFLMKKWKYNFVNLWQYYFHFWYQSYRIHINQLSNYSFYFMGYLSSLLKNSSTVRNQMLENSFLIDTVTNKFETIVPVIFLIGSLSKAQFCTVSGHPISKPIWADLSDSEIIERFGRMCRNLSHYHSGSSKKQGLYRIKYILRLSCARTLAGKHKSTVRTFLRRLGSGLLEEFFTEEEQVLSLILPKTIPFTFYGSKKERIWYLDIIRINDXVNHE</sequence>
<name>MATK_IRIDM</name>
<accession>Q4H1A1</accession>
<comment type="function">
    <text evidence="1">Usually encoded in the trnK tRNA gene intron. Probably assists in splicing its own and other chloroplast group II introns.</text>
</comment>
<comment type="subcellular location">
    <subcellularLocation>
        <location>Plastid</location>
        <location>Chloroplast</location>
    </subcellularLocation>
</comment>
<comment type="similarity">
    <text evidence="1">Belongs to the intron maturase 2 family. MatK subfamily.</text>
</comment>
<gene>
    <name evidence="1" type="primary">matK</name>
</gene>
<organism>
    <name type="scientific">Iris domestica</name>
    <name type="common">Leopard lily</name>
    <name type="synonym">Belamcanda chinensis</name>
    <dbReference type="NCBI Taxonomy" id="58944"/>
    <lineage>
        <taxon>Eukaryota</taxon>
        <taxon>Viridiplantae</taxon>
        <taxon>Streptophyta</taxon>
        <taxon>Embryophyta</taxon>
        <taxon>Tracheophyta</taxon>
        <taxon>Spermatophyta</taxon>
        <taxon>Magnoliopsida</taxon>
        <taxon>Liliopsida</taxon>
        <taxon>Asparagales</taxon>
        <taxon>Iridaceae</taxon>
        <taxon>Iridoideae</taxon>
        <taxon>Irideae</taxon>
        <taxon>Iris</taxon>
    </lineage>
</organism>
<geneLocation type="chloroplast"/>
<feature type="chain" id="PRO_0000143281" description="Maturase K">
    <location>
        <begin position="1"/>
        <end position="522"/>
    </location>
</feature>
<protein>
    <recommendedName>
        <fullName evidence="1">Maturase K</fullName>
    </recommendedName>
    <alternativeName>
        <fullName evidence="1">Intron maturase</fullName>
    </alternativeName>
</protein>